<evidence type="ECO:0000255" key="1">
    <source>
        <dbReference type="HAMAP-Rule" id="MF_01304"/>
    </source>
</evidence>
<sequence>MNRKKIIVAVVIVALLAAIGYGWSYYRQQQDATLTLYGNVDIRTVNLGFRVSGRLASLAVDEGDKIQPGEVLGKLDDGPYVNALKQAQANVQSAQAQLALLKAGYREEEIAQVRSEVSQREAAFSYADSFLKRQQGLWANKATSANELENARTARNQAQANLQASKDKLAQYLSGNRPQEIAQAEANLAQSEAELAQAQLNLQDTTLLSPSGGTVLTRAVEPGTILSASNTVFTLSLTDPVWVRAYVSERHLGQAIPGTEVEVFTDGRPDKPYHGKIGFVSPTAEFTPKSVETPDLRTDLVYRLRIIITDADESLRQGMPVTVRFVQP</sequence>
<gene>
    <name type="ordered locus">YE2891</name>
</gene>
<feature type="signal peptide" evidence="1">
    <location>
        <begin position="1"/>
        <end position="22"/>
    </location>
</feature>
<feature type="chain" id="PRO_5000201437" description="UPF0194 membrane protein YE2891">
    <location>
        <begin position="23"/>
        <end position="328"/>
    </location>
</feature>
<feature type="coiled-coil region" evidence="1">
    <location>
        <begin position="80"/>
        <end position="109"/>
    </location>
</feature>
<feature type="coiled-coil region" evidence="1">
    <location>
        <begin position="139"/>
        <end position="208"/>
    </location>
</feature>
<dbReference type="EMBL" id="AM286415">
    <property type="protein sequence ID" value="CAL12929.1"/>
    <property type="molecule type" value="Genomic_DNA"/>
</dbReference>
<dbReference type="RefSeq" id="YP_001007079.1">
    <property type="nucleotide sequence ID" value="NC_008800.1"/>
</dbReference>
<dbReference type="SMR" id="A1JSL8"/>
<dbReference type="KEGG" id="yen:YE2891"/>
<dbReference type="PATRIC" id="fig|393305.7.peg.3074"/>
<dbReference type="eggNOG" id="COG0845">
    <property type="taxonomic scope" value="Bacteria"/>
</dbReference>
<dbReference type="HOGENOM" id="CLU_018816_6_3_6"/>
<dbReference type="OrthoDB" id="9813967at2"/>
<dbReference type="Proteomes" id="UP000000642">
    <property type="component" value="Chromosome"/>
</dbReference>
<dbReference type="GO" id="GO:0042597">
    <property type="term" value="C:periplasmic space"/>
    <property type="evidence" value="ECO:0007669"/>
    <property type="project" value="UniProtKB-SubCell"/>
</dbReference>
<dbReference type="Gene3D" id="2.40.30.170">
    <property type="match status" value="1"/>
</dbReference>
<dbReference type="Gene3D" id="2.40.50.100">
    <property type="match status" value="2"/>
</dbReference>
<dbReference type="Gene3D" id="1.10.287.470">
    <property type="entry name" value="Helix hairpin bin"/>
    <property type="match status" value="1"/>
</dbReference>
<dbReference type="HAMAP" id="MF_01304">
    <property type="entry name" value="UPF0194"/>
    <property type="match status" value="1"/>
</dbReference>
<dbReference type="InterPro" id="IPR032317">
    <property type="entry name" value="CusB_D23"/>
</dbReference>
<dbReference type="InterPro" id="IPR022936">
    <property type="entry name" value="UPF0194_membrane_YbhG"/>
</dbReference>
<dbReference type="InterPro" id="IPR050465">
    <property type="entry name" value="UPF0194_transport"/>
</dbReference>
<dbReference type="NCBIfam" id="NF002939">
    <property type="entry name" value="PRK03598.1"/>
    <property type="match status" value="1"/>
</dbReference>
<dbReference type="PANTHER" id="PTHR32347">
    <property type="entry name" value="EFFLUX SYSTEM COMPONENT YKNX-RELATED"/>
    <property type="match status" value="1"/>
</dbReference>
<dbReference type="PANTHER" id="PTHR32347:SF29">
    <property type="entry name" value="UPF0194 MEMBRANE PROTEIN YBHG"/>
    <property type="match status" value="1"/>
</dbReference>
<dbReference type="Pfam" id="PF16576">
    <property type="entry name" value="HlyD_D23"/>
    <property type="match status" value="1"/>
</dbReference>
<dbReference type="SUPFAM" id="SSF111369">
    <property type="entry name" value="HlyD-like secretion proteins"/>
    <property type="match status" value="2"/>
</dbReference>
<accession>A1JSL8</accession>
<proteinExistence type="inferred from homology"/>
<organism>
    <name type="scientific">Yersinia enterocolitica serotype O:8 / biotype 1B (strain NCTC 13174 / 8081)</name>
    <dbReference type="NCBI Taxonomy" id="393305"/>
    <lineage>
        <taxon>Bacteria</taxon>
        <taxon>Pseudomonadati</taxon>
        <taxon>Pseudomonadota</taxon>
        <taxon>Gammaproteobacteria</taxon>
        <taxon>Enterobacterales</taxon>
        <taxon>Yersiniaceae</taxon>
        <taxon>Yersinia</taxon>
    </lineage>
</organism>
<name>Y2891_YERE8</name>
<comment type="subcellular location">
    <subcellularLocation>
        <location evidence="1">Periplasm</location>
    </subcellularLocation>
</comment>
<comment type="similarity">
    <text evidence="1">Belongs to the UPF0194 family.</text>
</comment>
<protein>
    <recommendedName>
        <fullName evidence="1">UPF0194 membrane protein YE2891</fullName>
    </recommendedName>
</protein>
<keyword id="KW-0175">Coiled coil</keyword>
<keyword id="KW-0574">Periplasm</keyword>
<keyword id="KW-0732">Signal</keyword>
<reference key="1">
    <citation type="journal article" date="2006" name="PLoS Genet.">
        <title>The complete genome sequence and comparative genome analysis of the high pathogenicity Yersinia enterocolitica strain 8081.</title>
        <authorList>
            <person name="Thomson N.R."/>
            <person name="Howard S."/>
            <person name="Wren B.W."/>
            <person name="Holden M.T.G."/>
            <person name="Crossman L."/>
            <person name="Challis G.L."/>
            <person name="Churcher C."/>
            <person name="Mungall K."/>
            <person name="Brooks K."/>
            <person name="Chillingworth T."/>
            <person name="Feltwell T."/>
            <person name="Abdellah Z."/>
            <person name="Hauser H."/>
            <person name="Jagels K."/>
            <person name="Maddison M."/>
            <person name="Moule S."/>
            <person name="Sanders M."/>
            <person name="Whitehead S."/>
            <person name="Quail M.A."/>
            <person name="Dougan G."/>
            <person name="Parkhill J."/>
            <person name="Prentice M.B."/>
        </authorList>
    </citation>
    <scope>NUCLEOTIDE SEQUENCE [LARGE SCALE GENOMIC DNA]</scope>
    <source>
        <strain>NCTC 13174 / 8081</strain>
    </source>
</reference>